<reference key="1">
    <citation type="journal article" date="2009" name="J. Bacteriol.">
        <title>The complete genome sequence of Bacillus anthracis Ames 'Ancestor'.</title>
        <authorList>
            <person name="Ravel J."/>
            <person name="Jiang L."/>
            <person name="Stanley S.T."/>
            <person name="Wilson M.R."/>
            <person name="Decker R.S."/>
            <person name="Read T.D."/>
            <person name="Worsham P."/>
            <person name="Keim P.S."/>
            <person name="Salzberg S.L."/>
            <person name="Fraser-Liggett C.M."/>
            <person name="Rasko D.A."/>
        </authorList>
    </citation>
    <scope>NUCLEOTIDE SEQUENCE [LARGE SCALE GENOMIC DNA]</scope>
    <source>
        <strain>Ames ancestor</strain>
    </source>
</reference>
<reference key="2">
    <citation type="submission" date="2004-01" db="EMBL/GenBank/DDBJ databases">
        <title>Complete genome sequence of Bacillus anthracis Sterne.</title>
        <authorList>
            <person name="Brettin T.S."/>
            <person name="Bruce D."/>
            <person name="Challacombe J.F."/>
            <person name="Gilna P."/>
            <person name="Han C."/>
            <person name="Hill K."/>
            <person name="Hitchcock P."/>
            <person name="Jackson P."/>
            <person name="Keim P."/>
            <person name="Longmire J."/>
            <person name="Lucas S."/>
            <person name="Okinaka R."/>
            <person name="Richardson P."/>
            <person name="Rubin E."/>
            <person name="Tice H."/>
        </authorList>
    </citation>
    <scope>NUCLEOTIDE SEQUENCE [LARGE SCALE GENOMIC DNA]</scope>
    <source>
        <strain>Sterne</strain>
    </source>
</reference>
<reference key="3">
    <citation type="journal article" date="2019" name="Nat. Microbiol.">
        <title>DABs are inorganic carbon pumps found throughout prokaryotic phyla.</title>
        <authorList>
            <person name="Desmarais J.J."/>
            <person name="Flamholz A.I."/>
            <person name="Blikstad C."/>
            <person name="Dugan E.J."/>
            <person name="Laughlin T.G."/>
            <person name="Oltrogge L.M."/>
            <person name="Chen A.W."/>
            <person name="Wetmore K."/>
            <person name="Diamond S."/>
            <person name="Wang J.Y."/>
            <person name="Savage D.F."/>
        </authorList>
    </citation>
    <scope>FUNCTION</scope>
    <scope>EXPRESSION IN ECOLI</scope>
    <source>
        <strain>Sterne</strain>
    </source>
</reference>
<sequence length="510" mass="56499">MLISLSSSTLLTLFFIALSASWLSGLLFLHARMPLRFVHIHIGIAALPSLVSLLALVNNNGDRVVGPWHLDTLAWLMAFFVLTIGLIIQRFSVRYLMGDRSYRKYFALFTFTTGVSSVAWLSDDLRFMIMCWGATLIGLVLLIGLNKGWKVVSEATKISGYLFTISWIALLSAIIWLFQITGQWQLTSVVTNENVAQFGTLEKTGINLLIIVAVMIPAAQWPFQRWLIESAVAPTPVSAIMHAGLVNAGGIMLTRFSPLFHDDIAQIILLIFSSISVLIGTGISLVQVDYKRQLVGSTIAQMGFMLIQCALGAYLAAVIHLILHGLFKATLFLQAGSSVQRVEVVKQSNKKMSNLWMIVGRVLGLFIAIAFWFITSGEGYQLVSALILGWSLYFSWKQLVVFGEGRMGRIAGLIVLIGFSLIYFTVHNSLYKWLHTDMYQSVQPSAPAVIFVICILLFSSVICTFVTRNQSSTLSAVLYLWSVRVGEARRKSVESHPSYLKHDVSKGGNS</sequence>
<proteinExistence type="inferred from homology"/>
<name>DABB_BACAN</name>
<gene>
    <name evidence="1 3" type="primary">dabB</name>
    <name evidence="5" type="ordered locus">GBAA_3183</name>
    <name evidence="6" type="ordered locus">BAS2959</name>
</gene>
<feature type="chain" id="PRO_0000453155" description="Probable inorganic carbon transporter subunit DabB">
    <location>
        <begin position="1"/>
        <end position="510"/>
    </location>
</feature>
<feature type="transmembrane region" description="Helical" evidence="1">
    <location>
        <begin position="9"/>
        <end position="29"/>
    </location>
</feature>
<feature type="transmembrane region" description="Helical" evidence="1">
    <location>
        <begin position="37"/>
        <end position="57"/>
    </location>
</feature>
<feature type="transmembrane region" description="Helical" evidence="1">
    <location>
        <begin position="68"/>
        <end position="88"/>
    </location>
</feature>
<feature type="transmembrane region" description="Helical" evidence="1">
    <location>
        <begin position="105"/>
        <end position="122"/>
    </location>
</feature>
<feature type="transmembrane region" description="Helical" evidence="1">
    <location>
        <begin position="125"/>
        <end position="145"/>
    </location>
</feature>
<feature type="transmembrane region" description="Helical" evidence="1">
    <location>
        <begin position="158"/>
        <end position="178"/>
    </location>
</feature>
<feature type="transmembrane region" description="Helical" evidence="1">
    <location>
        <begin position="204"/>
        <end position="224"/>
    </location>
</feature>
<feature type="transmembrane region" description="Helical" evidence="1">
    <location>
        <begin position="226"/>
        <end position="246"/>
    </location>
</feature>
<feature type="transmembrane region" description="Helical" evidence="1">
    <location>
        <begin position="266"/>
        <end position="286"/>
    </location>
</feature>
<feature type="transmembrane region" description="Helical" evidence="1">
    <location>
        <begin position="303"/>
        <end position="323"/>
    </location>
</feature>
<feature type="transmembrane region" description="Helical" evidence="1">
    <location>
        <begin position="355"/>
        <end position="375"/>
    </location>
</feature>
<feature type="transmembrane region" description="Helical" evidence="1">
    <location>
        <begin position="382"/>
        <end position="402"/>
    </location>
</feature>
<feature type="transmembrane region" description="Helical" evidence="1">
    <location>
        <begin position="410"/>
        <end position="430"/>
    </location>
</feature>
<feature type="transmembrane region" description="Helical" evidence="1">
    <location>
        <begin position="446"/>
        <end position="466"/>
    </location>
</feature>
<comment type="function">
    <text evidence="2">Part of an energy-coupled inorganic carbon pump. Expression of both dabA and dabB (DA2) restores growth in ambient air to E.coli deleted of its carbonic anhydrase genes (called CAfree, deletion of 'can' and 'cynT').</text>
</comment>
<comment type="subunit">
    <text evidence="1">Forms a complex with DabA.</text>
</comment>
<comment type="subcellular location">
    <subcellularLocation>
        <location evidence="1">Cell membrane</location>
        <topology evidence="1">Multi-pass membrane protein</topology>
    </subcellularLocation>
</comment>
<comment type="similarity">
    <text evidence="1">Belongs to the inorganic carbon transporter (TC 9.A.2) DabB family.</text>
</comment>
<dbReference type="EMBL" id="AE017334">
    <property type="protein sequence ID" value="AAT32299.1"/>
    <property type="molecule type" value="Genomic_DNA"/>
</dbReference>
<dbReference type="EMBL" id="AE017225">
    <property type="protein sequence ID" value="AAT55267.1"/>
    <property type="molecule type" value="Genomic_DNA"/>
</dbReference>
<dbReference type="RefSeq" id="WP_000908909.1">
    <property type="nucleotide sequence ID" value="NZ_WXXJ01000008.1"/>
</dbReference>
<dbReference type="RefSeq" id="YP_029216.1">
    <property type="nucleotide sequence ID" value="NC_005945.1"/>
</dbReference>
<dbReference type="SMR" id="A0A6L8Q027"/>
<dbReference type="DNASU" id="1086894"/>
<dbReference type="GeneID" id="45022969"/>
<dbReference type="KEGG" id="bar:GBAA_3183"/>
<dbReference type="KEGG" id="bat:BAS2959"/>
<dbReference type="PATRIC" id="fig|1392.230.peg.3142"/>
<dbReference type="HOGENOM" id="CLU_007100_11_2_9"/>
<dbReference type="OMA" id="LRFMIIC"/>
<dbReference type="OrthoDB" id="9807568at2"/>
<dbReference type="Proteomes" id="UP000000594">
    <property type="component" value="Chromosome"/>
</dbReference>
<dbReference type="GO" id="GO:0005886">
    <property type="term" value="C:plasma membrane"/>
    <property type="evidence" value="ECO:0007669"/>
    <property type="project" value="UniProtKB-SubCell"/>
</dbReference>
<dbReference type="GO" id="GO:0008137">
    <property type="term" value="F:NADH dehydrogenase (ubiquinone) activity"/>
    <property type="evidence" value="ECO:0007669"/>
    <property type="project" value="InterPro"/>
</dbReference>
<dbReference type="GO" id="GO:0042773">
    <property type="term" value="P:ATP synthesis coupled electron transport"/>
    <property type="evidence" value="ECO:0007669"/>
    <property type="project" value="InterPro"/>
</dbReference>
<dbReference type="GO" id="GO:0015990">
    <property type="term" value="P:electron transport coupled proton transport"/>
    <property type="evidence" value="ECO:0007669"/>
    <property type="project" value="TreeGrafter"/>
</dbReference>
<dbReference type="HAMAP" id="MF_00862">
    <property type="entry name" value="DabB"/>
    <property type="match status" value="1"/>
</dbReference>
<dbReference type="InterPro" id="IPR001750">
    <property type="entry name" value="ND/Mrp_TM"/>
</dbReference>
<dbReference type="InterPro" id="IPR003945">
    <property type="entry name" value="NU5C-like"/>
</dbReference>
<dbReference type="InterPro" id="IPR001516">
    <property type="entry name" value="Proton_antipo_N"/>
</dbReference>
<dbReference type="InterPro" id="IPR046396">
    <property type="entry name" value="Transporter_DabB"/>
</dbReference>
<dbReference type="NCBIfam" id="NF006373">
    <property type="entry name" value="PRK08601.1"/>
    <property type="match status" value="1"/>
</dbReference>
<dbReference type="PANTHER" id="PTHR42829:SF1">
    <property type="entry name" value="INORGANIC CARBON TRANSPORTER SUBUNIT DABB-RELATED"/>
    <property type="match status" value="1"/>
</dbReference>
<dbReference type="PANTHER" id="PTHR42829">
    <property type="entry name" value="NADH-UBIQUINONE OXIDOREDUCTASE CHAIN 5"/>
    <property type="match status" value="1"/>
</dbReference>
<dbReference type="Pfam" id="PF00361">
    <property type="entry name" value="Proton_antipo_M"/>
    <property type="match status" value="1"/>
</dbReference>
<dbReference type="Pfam" id="PF00662">
    <property type="entry name" value="Proton_antipo_N"/>
    <property type="match status" value="1"/>
</dbReference>
<dbReference type="PRINTS" id="PR01434">
    <property type="entry name" value="NADHDHGNASE5"/>
</dbReference>
<keyword id="KW-1003">Cell membrane</keyword>
<keyword id="KW-0472">Membrane</keyword>
<keyword id="KW-1185">Reference proteome</keyword>
<keyword id="KW-0812">Transmembrane</keyword>
<keyword id="KW-1133">Transmembrane helix</keyword>
<keyword id="KW-0813">Transport</keyword>
<evidence type="ECO:0000255" key="1">
    <source>
        <dbReference type="HAMAP-Rule" id="MF_00862"/>
    </source>
</evidence>
<evidence type="ECO:0000269" key="2">
    <source>
    </source>
</evidence>
<evidence type="ECO:0000303" key="3">
    <source>
    </source>
</evidence>
<evidence type="ECO:0000305" key="4">
    <source>
    </source>
</evidence>
<evidence type="ECO:0000312" key="5">
    <source>
        <dbReference type="EMBL" id="AAT32299.1"/>
    </source>
</evidence>
<evidence type="ECO:0000312" key="6">
    <source>
        <dbReference type="EMBL" id="AAT55267.1"/>
    </source>
</evidence>
<protein>
    <recommendedName>
        <fullName evidence="1 4">Probable inorganic carbon transporter subunit DabB</fullName>
    </recommendedName>
</protein>
<organism>
    <name type="scientific">Bacillus anthracis</name>
    <dbReference type="NCBI Taxonomy" id="1392"/>
    <lineage>
        <taxon>Bacteria</taxon>
        <taxon>Bacillati</taxon>
        <taxon>Bacillota</taxon>
        <taxon>Bacilli</taxon>
        <taxon>Bacillales</taxon>
        <taxon>Bacillaceae</taxon>
        <taxon>Bacillus</taxon>
        <taxon>Bacillus cereus group</taxon>
    </lineage>
</organism>
<accession>A0A6L8Q027</accession>
<accession>A0A0F7RA26</accession>
<accession>E9RAM6</accession>
<accession>E9RAM7</accession>
<accession>Q6HWS2</accession>
<accession>Q6KQW5</accession>
<accession>Q81NK9</accession>